<dbReference type="EC" id="2.3.1.31" evidence="1 2"/>
<dbReference type="EMBL" id="CP000158">
    <property type="protein sequence ID" value="ABI77869.1"/>
    <property type="molecule type" value="Genomic_DNA"/>
</dbReference>
<dbReference type="SMR" id="Q0BX37"/>
<dbReference type="STRING" id="228405.HNE_3283"/>
<dbReference type="KEGG" id="hne:HNE_3283"/>
<dbReference type="eggNOG" id="COG1897">
    <property type="taxonomic scope" value="Bacteria"/>
</dbReference>
<dbReference type="HOGENOM" id="CLU_057851_0_1_5"/>
<dbReference type="UniPathway" id="UPA00051">
    <property type="reaction ID" value="UER00074"/>
</dbReference>
<dbReference type="Proteomes" id="UP000001959">
    <property type="component" value="Chromosome"/>
</dbReference>
<dbReference type="GO" id="GO:0005737">
    <property type="term" value="C:cytoplasm"/>
    <property type="evidence" value="ECO:0007669"/>
    <property type="project" value="UniProtKB-SubCell"/>
</dbReference>
<dbReference type="GO" id="GO:0004414">
    <property type="term" value="F:homoserine O-acetyltransferase activity"/>
    <property type="evidence" value="ECO:0007669"/>
    <property type="project" value="UniProtKB-EC"/>
</dbReference>
<dbReference type="GO" id="GO:0008899">
    <property type="term" value="F:homoserine O-succinyltransferase activity"/>
    <property type="evidence" value="ECO:0007669"/>
    <property type="project" value="UniProtKB-UniRule"/>
</dbReference>
<dbReference type="GO" id="GO:0019281">
    <property type="term" value="P:L-methionine biosynthetic process from homoserine via O-succinyl-L-homoserine and cystathionine"/>
    <property type="evidence" value="ECO:0007669"/>
    <property type="project" value="InterPro"/>
</dbReference>
<dbReference type="CDD" id="cd03131">
    <property type="entry name" value="GATase1_HTS"/>
    <property type="match status" value="1"/>
</dbReference>
<dbReference type="Gene3D" id="3.40.50.880">
    <property type="match status" value="1"/>
</dbReference>
<dbReference type="HAMAP" id="MF_00295">
    <property type="entry name" value="MetA_acyltransf"/>
    <property type="match status" value="1"/>
</dbReference>
<dbReference type="InterPro" id="IPR029062">
    <property type="entry name" value="Class_I_gatase-like"/>
</dbReference>
<dbReference type="InterPro" id="IPR005697">
    <property type="entry name" value="HST_MetA"/>
</dbReference>
<dbReference type="InterPro" id="IPR033752">
    <property type="entry name" value="MetA_family"/>
</dbReference>
<dbReference type="NCBIfam" id="TIGR01001">
    <property type="entry name" value="metA"/>
    <property type="match status" value="1"/>
</dbReference>
<dbReference type="PANTHER" id="PTHR20919">
    <property type="entry name" value="HOMOSERINE O-SUCCINYLTRANSFERASE"/>
    <property type="match status" value="1"/>
</dbReference>
<dbReference type="PANTHER" id="PTHR20919:SF0">
    <property type="entry name" value="HOMOSERINE O-SUCCINYLTRANSFERASE"/>
    <property type="match status" value="1"/>
</dbReference>
<dbReference type="Pfam" id="PF04204">
    <property type="entry name" value="HTS"/>
    <property type="match status" value="1"/>
</dbReference>
<dbReference type="PIRSF" id="PIRSF000450">
    <property type="entry name" value="H_ser_succinyltr"/>
    <property type="match status" value="1"/>
</dbReference>
<dbReference type="SUPFAM" id="SSF52317">
    <property type="entry name" value="Class I glutamine amidotransferase-like"/>
    <property type="match status" value="1"/>
</dbReference>
<comment type="function">
    <text evidence="1 2">Transfers an acetyl group from acetyl-CoA to L-homoserine, forming acetyl-L-homoserine.</text>
</comment>
<comment type="catalytic activity">
    <reaction evidence="1 2">
        <text>L-homoserine + acetyl-CoA = O-acetyl-L-homoserine + CoA</text>
        <dbReference type="Rhea" id="RHEA:13701"/>
        <dbReference type="ChEBI" id="CHEBI:57287"/>
        <dbReference type="ChEBI" id="CHEBI:57288"/>
        <dbReference type="ChEBI" id="CHEBI:57476"/>
        <dbReference type="ChEBI" id="CHEBI:57716"/>
        <dbReference type="EC" id="2.3.1.31"/>
    </reaction>
</comment>
<comment type="pathway">
    <text evidence="1">Amino-acid biosynthesis; L-methionine biosynthesis via de novo pathway; O-acetyl-L-homoserine from L-homoserine: step 1/1.</text>
</comment>
<comment type="subcellular location">
    <subcellularLocation>
        <location evidence="1">Cytoplasm</location>
    </subcellularLocation>
</comment>
<comment type="similarity">
    <text evidence="1">Belongs to the MetA family.</text>
</comment>
<keyword id="KW-0012">Acyltransferase</keyword>
<keyword id="KW-0028">Amino-acid biosynthesis</keyword>
<keyword id="KW-0963">Cytoplasm</keyword>
<keyword id="KW-0486">Methionine biosynthesis</keyword>
<keyword id="KW-1185">Reference proteome</keyword>
<keyword id="KW-0808">Transferase</keyword>
<proteinExistence type="evidence at protein level"/>
<feature type="chain" id="PRO_1000021816" description="Homoserine O-acetyltransferase">
    <location>
        <begin position="1"/>
        <end position="305"/>
    </location>
</feature>
<feature type="active site" description="Acyl-thioester intermediate" evidence="1">
    <location>
        <position position="142"/>
    </location>
</feature>
<feature type="active site" description="Proton acceptor" evidence="1">
    <location>
        <position position="235"/>
    </location>
</feature>
<feature type="active site" evidence="1">
    <location>
        <position position="237"/>
    </location>
</feature>
<feature type="binding site" evidence="1">
    <location>
        <position position="163"/>
    </location>
    <ligand>
        <name>substrate</name>
    </ligand>
</feature>
<feature type="binding site" evidence="1">
    <location>
        <position position="192"/>
    </location>
    <ligand>
        <name>substrate</name>
    </ligand>
</feature>
<feature type="binding site" evidence="1">
    <location>
        <position position="249"/>
    </location>
    <ligand>
        <name>substrate</name>
    </ligand>
</feature>
<feature type="site" description="Important for acyl-CoA specificity" evidence="1">
    <location>
        <position position="111"/>
    </location>
</feature>
<feature type="site" description="Important for substrate specificity" evidence="1">
    <location>
        <position position="192"/>
    </location>
</feature>
<reference key="1">
    <citation type="journal article" date="2006" name="J. Bacteriol.">
        <title>Comparative genomic evidence for a close relationship between the dimorphic prosthecate bacteria Hyphomonas neptunium and Caulobacter crescentus.</title>
        <authorList>
            <person name="Badger J.H."/>
            <person name="Hoover T.R."/>
            <person name="Brun Y.V."/>
            <person name="Weiner R.M."/>
            <person name="Laub M.T."/>
            <person name="Alexandre G."/>
            <person name="Mrazek J."/>
            <person name="Ren Q."/>
            <person name="Paulsen I.T."/>
            <person name="Nelson K.E."/>
            <person name="Khouri H.M."/>
            <person name="Radune D."/>
            <person name="Sosa J."/>
            <person name="Dodson R.J."/>
            <person name="Sullivan S.A."/>
            <person name="Rosovitz M.J."/>
            <person name="Madupu R."/>
            <person name="Brinkac L.M."/>
            <person name="Durkin A.S."/>
            <person name="Daugherty S.C."/>
            <person name="Kothari S.P."/>
            <person name="Giglio M.G."/>
            <person name="Zhou L."/>
            <person name="Haft D.H."/>
            <person name="Selengut J.D."/>
            <person name="Davidsen T.M."/>
            <person name="Yang Q."/>
            <person name="Zafar N."/>
            <person name="Ward N.L."/>
        </authorList>
    </citation>
    <scope>NUCLEOTIDE SEQUENCE [LARGE SCALE GENOMIC DNA]</scope>
    <source>
        <strain>ATCC 15444</strain>
    </source>
</reference>
<reference key="2">
    <citation type="journal article" date="2017" name="Nat. Chem. Biol.">
        <title>Parallel evolution of non-homologous isofunctional enzymes in methionine biosynthesis.</title>
        <authorList>
            <person name="Bastard K."/>
            <person name="Perret A."/>
            <person name="Mariage A."/>
            <person name="Bessonnet T."/>
            <person name="Pinet-Turpault A."/>
            <person name="Petit J.L."/>
            <person name="Darii E."/>
            <person name="Bazire P."/>
            <person name="Vergne-Vaxelaire C."/>
            <person name="Brewee C."/>
            <person name="Debard A."/>
            <person name="Pellouin V."/>
            <person name="Besnard-Gonnet M."/>
            <person name="Artiguenave F."/>
            <person name="Medigue C."/>
            <person name="Vallenet D."/>
            <person name="Danchin A."/>
            <person name="Zaparucha A."/>
            <person name="Weissenbach J."/>
            <person name="Salanoubat M."/>
            <person name="de Berardinis V."/>
        </authorList>
    </citation>
    <scope>FUNCTION</scope>
    <scope>CATALYTIC ACTIVITY</scope>
</reference>
<accession>Q0BX37</accession>
<name>METAA_HYPNA</name>
<sequence length="305" mass="35435">MPIRIPDTLPARETLLKEGVAVMTETDAVRQDIRPLQIALLNLMPNKIRTETQIARLIGASPLQVELTLVRVGGHTPKNTSQEHLISFYQTWEEIRERKFDGFIITGAPIEQMPFEEVNYWEELTQIFDWTQTNVHSPFYICWGAMAAAYHFHGLPKYQLEAKAFGVFRHRNLDLASPYLSGFSDDFAIPVSRWTEVRRADVLERQSLRLLIDSDDTGPCLLEDRARRSLYMFNHVEYDSFSLKEEFERDREAGKQIQVPFGYYPGDDPARQPLNRWRSHAHLLFGNWINQTYQSTPFSLDEIGQ</sequence>
<protein>
    <recommendedName>
        <fullName evidence="1">Homoserine O-acetyltransferase</fullName>
        <shortName evidence="1 3">HAT</shortName>
        <ecNumber evidence="1 2">2.3.1.31</ecNumber>
    </recommendedName>
    <alternativeName>
        <fullName evidence="1">Homoserine transacetylase</fullName>
        <shortName evidence="1">HTA</shortName>
    </alternativeName>
</protein>
<organism>
    <name type="scientific">Hyphomonas neptunium (strain ATCC 15444)</name>
    <dbReference type="NCBI Taxonomy" id="228405"/>
    <lineage>
        <taxon>Bacteria</taxon>
        <taxon>Pseudomonadati</taxon>
        <taxon>Pseudomonadota</taxon>
        <taxon>Alphaproteobacteria</taxon>
        <taxon>Hyphomonadales</taxon>
        <taxon>Hyphomonadaceae</taxon>
        <taxon>Hyphomonas</taxon>
    </lineage>
</organism>
<gene>
    <name evidence="1 3" type="primary">metAA</name>
    <name type="ordered locus">HNE_3283</name>
</gene>
<evidence type="ECO:0000255" key="1">
    <source>
        <dbReference type="HAMAP-Rule" id="MF_00295"/>
    </source>
</evidence>
<evidence type="ECO:0000269" key="2">
    <source>
    </source>
</evidence>
<evidence type="ECO:0000303" key="3">
    <source>
    </source>
</evidence>